<reference key="1">
    <citation type="submission" date="2006-06" db="EMBL/GenBank/DDBJ databases">
        <title>Complete sequence of Pseudoalteromonas atlantica T6c.</title>
        <authorList>
            <consortium name="US DOE Joint Genome Institute"/>
            <person name="Copeland A."/>
            <person name="Lucas S."/>
            <person name="Lapidus A."/>
            <person name="Barry K."/>
            <person name="Detter J.C."/>
            <person name="Glavina del Rio T."/>
            <person name="Hammon N."/>
            <person name="Israni S."/>
            <person name="Dalin E."/>
            <person name="Tice H."/>
            <person name="Pitluck S."/>
            <person name="Saunders E."/>
            <person name="Brettin T."/>
            <person name="Bruce D."/>
            <person name="Han C."/>
            <person name="Tapia R."/>
            <person name="Gilna P."/>
            <person name="Schmutz J."/>
            <person name="Larimer F."/>
            <person name="Land M."/>
            <person name="Hauser L."/>
            <person name="Kyrpides N."/>
            <person name="Kim E."/>
            <person name="Karls A.C."/>
            <person name="Bartlett D."/>
            <person name="Higgins B.P."/>
            <person name="Richardson P."/>
        </authorList>
    </citation>
    <scope>NUCLEOTIDE SEQUENCE [LARGE SCALE GENOMIC DNA]</scope>
    <source>
        <strain>T6c / ATCC BAA-1087</strain>
    </source>
</reference>
<sequence length="393" mass="43372">MVIKPKIRGFICTNAHPEGCAASVAQQIEYVSSQGDLGSGPKNVLVIGSSTGYGLASRIVSAFGYGANTLGVCFEKAPSERKTATAGWYNTAAFHKEAKEKGLFAQTINGDAFSKEIKAQAIETIKREMGQVDLVIYSLASPRRTDPETGEVYKSTLKPVGQAYTTKTYDTDKDRIHDISLEPANEDEIAQTIKVMGGEDWELWLDALAEADLLAYGCKTTAYTYIGKELTWPIYGQATIGKAKEDLDRAAAAIVSKNQEKHIEAYVSSLKALVTQASSAIPVMPLYISLIYKVMKEEGTHEGCIEQIKGLFTERLFAQSPALDEQGRLRMDGKETNEATQAKIKALWDQVTQENFHELSDYAGYHHEFLKLFGFDVEGVDYEKEQNTLADWD</sequence>
<gene>
    <name evidence="1" type="primary">fabV</name>
    <name type="ordered locus">Patl_0451</name>
</gene>
<proteinExistence type="inferred from homology"/>
<comment type="function">
    <text evidence="1">Involved in the final reduction of the elongation cycle of fatty acid synthesis (FAS II). Catalyzes the reduction of a carbon-carbon double bond in an enoyl moiety that is covalently linked to an acyl carrier protein (ACP).</text>
</comment>
<comment type="catalytic activity">
    <reaction evidence="1">
        <text>a 2,3-saturated acyl-[ACP] + NAD(+) = a (2E)-enoyl-[ACP] + NADH + H(+)</text>
        <dbReference type="Rhea" id="RHEA:10240"/>
        <dbReference type="Rhea" id="RHEA-COMP:9925"/>
        <dbReference type="Rhea" id="RHEA-COMP:9926"/>
        <dbReference type="ChEBI" id="CHEBI:15378"/>
        <dbReference type="ChEBI" id="CHEBI:57540"/>
        <dbReference type="ChEBI" id="CHEBI:57945"/>
        <dbReference type="ChEBI" id="CHEBI:78784"/>
        <dbReference type="ChEBI" id="CHEBI:78785"/>
        <dbReference type="EC" id="1.3.1.9"/>
    </reaction>
</comment>
<comment type="pathway">
    <text evidence="1">Lipid metabolism; fatty acid biosynthesis.</text>
</comment>
<comment type="subunit">
    <text evidence="1">Monomer.</text>
</comment>
<comment type="similarity">
    <text evidence="1">Belongs to the TER reductase family.</text>
</comment>
<evidence type="ECO:0000255" key="1">
    <source>
        <dbReference type="HAMAP-Rule" id="MF_01838"/>
    </source>
</evidence>
<name>FABV_PSEA6</name>
<organism>
    <name type="scientific">Pseudoalteromonas atlantica (strain T6c / ATCC BAA-1087)</name>
    <dbReference type="NCBI Taxonomy" id="3042615"/>
    <lineage>
        <taxon>Bacteria</taxon>
        <taxon>Pseudomonadati</taxon>
        <taxon>Pseudomonadota</taxon>
        <taxon>Gammaproteobacteria</taxon>
        <taxon>Alteromonadales</taxon>
        <taxon>Alteromonadaceae</taxon>
        <taxon>Paraglaciecola</taxon>
    </lineage>
</organism>
<keyword id="KW-0275">Fatty acid biosynthesis</keyword>
<keyword id="KW-0276">Fatty acid metabolism</keyword>
<keyword id="KW-0444">Lipid biosynthesis</keyword>
<keyword id="KW-0443">Lipid metabolism</keyword>
<keyword id="KW-0520">NAD</keyword>
<keyword id="KW-0560">Oxidoreductase</keyword>
<dbReference type="EC" id="1.3.1.9" evidence="1"/>
<dbReference type="EMBL" id="CP000388">
    <property type="protein sequence ID" value="ABG38981.1"/>
    <property type="molecule type" value="Genomic_DNA"/>
</dbReference>
<dbReference type="RefSeq" id="WP_011573376.1">
    <property type="nucleotide sequence ID" value="NC_008228.1"/>
</dbReference>
<dbReference type="SMR" id="Q15YQ7"/>
<dbReference type="STRING" id="342610.Patl_0451"/>
<dbReference type="KEGG" id="pat:Patl_0451"/>
<dbReference type="eggNOG" id="COG3007">
    <property type="taxonomic scope" value="Bacteria"/>
</dbReference>
<dbReference type="HOGENOM" id="CLU_057698_1_0_6"/>
<dbReference type="OrthoDB" id="9802260at2"/>
<dbReference type="UniPathway" id="UPA00094"/>
<dbReference type="Proteomes" id="UP000001981">
    <property type="component" value="Chromosome"/>
</dbReference>
<dbReference type="GO" id="GO:0004318">
    <property type="term" value="F:enoyl-[acyl-carrier-protein] reductase (NADH) activity"/>
    <property type="evidence" value="ECO:0007669"/>
    <property type="project" value="UniProtKB-UniRule"/>
</dbReference>
<dbReference type="GO" id="GO:0051287">
    <property type="term" value="F:NAD binding"/>
    <property type="evidence" value="ECO:0007669"/>
    <property type="project" value="UniProtKB-UniRule"/>
</dbReference>
<dbReference type="GO" id="GO:0050343">
    <property type="term" value="F:trans-2-enoyl-CoA reductase (NADH) activity"/>
    <property type="evidence" value="ECO:0007669"/>
    <property type="project" value="TreeGrafter"/>
</dbReference>
<dbReference type="GO" id="GO:0006633">
    <property type="term" value="P:fatty acid biosynthetic process"/>
    <property type="evidence" value="ECO:0007669"/>
    <property type="project" value="UniProtKB-UniRule"/>
</dbReference>
<dbReference type="FunFam" id="3.40.50.720:FF:000221">
    <property type="entry name" value="Enoyl-[acyl-carrier-protein] reductase [NADH]"/>
    <property type="match status" value="1"/>
</dbReference>
<dbReference type="Gene3D" id="3.40.50.720">
    <property type="entry name" value="NAD(P)-binding Rossmann-like Domain"/>
    <property type="match status" value="1"/>
</dbReference>
<dbReference type="HAMAP" id="MF_01838">
    <property type="entry name" value="FabV_reductase"/>
    <property type="match status" value="1"/>
</dbReference>
<dbReference type="InterPro" id="IPR024906">
    <property type="entry name" value="Eno_Rdtase_FAD-bd_dom"/>
</dbReference>
<dbReference type="InterPro" id="IPR024910">
    <property type="entry name" value="Enoyl-CoA_Rdtase_cat_dom"/>
</dbReference>
<dbReference type="InterPro" id="IPR050048">
    <property type="entry name" value="FabV-like_NADH_b"/>
</dbReference>
<dbReference type="InterPro" id="IPR010758">
    <property type="entry name" value="Trans-2-enoyl-CoA_reductase"/>
</dbReference>
<dbReference type="NCBIfam" id="NF043048">
    <property type="entry name" value="EnoyACPredFabV"/>
    <property type="match status" value="1"/>
</dbReference>
<dbReference type="NCBIfam" id="NF010177">
    <property type="entry name" value="PRK13656.1"/>
    <property type="match status" value="1"/>
</dbReference>
<dbReference type="PANTHER" id="PTHR37480">
    <property type="entry name" value="ENOYL-[ACYL-CARRIER-PROTEIN] REDUCTASE [NADH]"/>
    <property type="match status" value="1"/>
</dbReference>
<dbReference type="PANTHER" id="PTHR37480:SF1">
    <property type="entry name" value="ENOYL-[ACYL-CARRIER-PROTEIN] REDUCTASE [NADH]"/>
    <property type="match status" value="1"/>
</dbReference>
<dbReference type="Pfam" id="PF07055">
    <property type="entry name" value="Eno-Rase_FAD_bd"/>
    <property type="match status" value="1"/>
</dbReference>
<dbReference type="Pfam" id="PF12242">
    <property type="entry name" value="Eno-Rase_NADH_b"/>
    <property type="match status" value="1"/>
</dbReference>
<dbReference type="Pfam" id="PF12241">
    <property type="entry name" value="Enoyl_reductase"/>
    <property type="match status" value="1"/>
</dbReference>
<accession>Q15YQ7</accession>
<feature type="chain" id="PRO_1000070486" description="Enoyl-[acyl-carrier-protein] reductase [NADH]">
    <location>
        <begin position="1"/>
        <end position="393"/>
    </location>
</feature>
<feature type="active site" description="Proton donor" evidence="1">
    <location>
        <position position="235"/>
    </location>
</feature>
<feature type="binding site" evidence="1">
    <location>
        <begin position="48"/>
        <end position="53"/>
    </location>
    <ligand>
        <name>NAD(+)</name>
        <dbReference type="ChEBI" id="CHEBI:57540"/>
    </ligand>
</feature>
<feature type="binding site" evidence="1">
    <location>
        <begin position="74"/>
        <end position="75"/>
    </location>
    <ligand>
        <name>NAD(+)</name>
        <dbReference type="ChEBI" id="CHEBI:57540"/>
    </ligand>
</feature>
<feature type="binding site" evidence="1">
    <location>
        <begin position="111"/>
        <end position="112"/>
    </location>
    <ligand>
        <name>NAD(+)</name>
        <dbReference type="ChEBI" id="CHEBI:57540"/>
    </ligand>
</feature>
<feature type="binding site" evidence="1">
    <location>
        <begin position="139"/>
        <end position="140"/>
    </location>
    <ligand>
        <name>NAD(+)</name>
        <dbReference type="ChEBI" id="CHEBI:57540"/>
    </ligand>
</feature>
<feature type="binding site" evidence="1">
    <location>
        <position position="225"/>
    </location>
    <ligand>
        <name>substrate</name>
    </ligand>
</feature>
<feature type="binding site" evidence="1">
    <location>
        <position position="244"/>
    </location>
    <ligand>
        <name>NAD(+)</name>
        <dbReference type="ChEBI" id="CHEBI:57540"/>
    </ligand>
</feature>
<feature type="binding site" evidence="1">
    <location>
        <begin position="273"/>
        <end position="275"/>
    </location>
    <ligand>
        <name>NAD(+)</name>
        <dbReference type="ChEBI" id="CHEBI:57540"/>
    </ligand>
</feature>
<feature type="site" description="Plays an important role in discriminating NADH against NADPH" evidence="1">
    <location>
        <position position="75"/>
    </location>
</feature>
<protein>
    <recommendedName>
        <fullName evidence="1">Enoyl-[acyl-carrier-protein] reductase [NADH]</fullName>
        <shortName evidence="1">ENR</shortName>
        <ecNumber evidence="1">1.3.1.9</ecNumber>
    </recommendedName>
</protein>